<gene>
    <name evidence="1" type="primary">acpS</name>
    <name type="ordered locus">YPA_2368</name>
</gene>
<proteinExistence type="inferred from homology"/>
<accession>Q1C5D9</accession>
<keyword id="KW-0963">Cytoplasm</keyword>
<keyword id="KW-0275">Fatty acid biosynthesis</keyword>
<keyword id="KW-0276">Fatty acid metabolism</keyword>
<keyword id="KW-0444">Lipid biosynthesis</keyword>
<keyword id="KW-0443">Lipid metabolism</keyword>
<keyword id="KW-0460">Magnesium</keyword>
<keyword id="KW-0479">Metal-binding</keyword>
<keyword id="KW-0808">Transferase</keyword>
<reference key="1">
    <citation type="journal article" date="2006" name="J. Bacteriol.">
        <title>Complete genome sequence of Yersinia pestis strains Antiqua and Nepal516: evidence of gene reduction in an emerging pathogen.</title>
        <authorList>
            <person name="Chain P.S.G."/>
            <person name="Hu P."/>
            <person name="Malfatti S.A."/>
            <person name="Radnedge L."/>
            <person name="Larimer F."/>
            <person name="Vergez L.M."/>
            <person name="Worsham P."/>
            <person name="Chu M.C."/>
            <person name="Andersen G.L."/>
        </authorList>
    </citation>
    <scope>NUCLEOTIDE SEQUENCE [LARGE SCALE GENOMIC DNA]</scope>
    <source>
        <strain>Antiqua</strain>
    </source>
</reference>
<dbReference type="EC" id="2.7.8.7" evidence="1"/>
<dbReference type="EMBL" id="CP000308">
    <property type="protein sequence ID" value="ABG14333.1"/>
    <property type="molecule type" value="Genomic_DNA"/>
</dbReference>
<dbReference type="RefSeq" id="WP_002211568.1">
    <property type="nucleotide sequence ID" value="NZ_CP009906.1"/>
</dbReference>
<dbReference type="SMR" id="Q1C5D9"/>
<dbReference type="GeneID" id="57975883"/>
<dbReference type="KEGG" id="ypa:YPA_2368"/>
<dbReference type="Proteomes" id="UP000001971">
    <property type="component" value="Chromosome"/>
</dbReference>
<dbReference type="GO" id="GO:0005737">
    <property type="term" value="C:cytoplasm"/>
    <property type="evidence" value="ECO:0007669"/>
    <property type="project" value="UniProtKB-SubCell"/>
</dbReference>
<dbReference type="GO" id="GO:0008897">
    <property type="term" value="F:holo-[acyl-carrier-protein] synthase activity"/>
    <property type="evidence" value="ECO:0007669"/>
    <property type="project" value="UniProtKB-UniRule"/>
</dbReference>
<dbReference type="GO" id="GO:0000287">
    <property type="term" value="F:magnesium ion binding"/>
    <property type="evidence" value="ECO:0007669"/>
    <property type="project" value="UniProtKB-UniRule"/>
</dbReference>
<dbReference type="GO" id="GO:0006633">
    <property type="term" value="P:fatty acid biosynthetic process"/>
    <property type="evidence" value="ECO:0007669"/>
    <property type="project" value="UniProtKB-UniRule"/>
</dbReference>
<dbReference type="FunFam" id="3.90.470.20:FF:000001">
    <property type="entry name" value="Holo-[acyl-carrier-protein] synthase"/>
    <property type="match status" value="1"/>
</dbReference>
<dbReference type="Gene3D" id="3.90.470.20">
    <property type="entry name" value="4'-phosphopantetheinyl transferase domain"/>
    <property type="match status" value="1"/>
</dbReference>
<dbReference type="HAMAP" id="MF_00101">
    <property type="entry name" value="AcpS"/>
    <property type="match status" value="1"/>
</dbReference>
<dbReference type="InterPro" id="IPR008278">
    <property type="entry name" value="4-PPantetheinyl_Trfase_dom"/>
</dbReference>
<dbReference type="InterPro" id="IPR037143">
    <property type="entry name" value="4-PPantetheinyl_Trfase_dom_sf"/>
</dbReference>
<dbReference type="InterPro" id="IPR002582">
    <property type="entry name" value="ACPS"/>
</dbReference>
<dbReference type="InterPro" id="IPR004568">
    <property type="entry name" value="Ppantetheine-prot_Trfase_dom"/>
</dbReference>
<dbReference type="NCBIfam" id="TIGR00516">
    <property type="entry name" value="acpS"/>
    <property type="match status" value="1"/>
</dbReference>
<dbReference type="NCBIfam" id="TIGR00556">
    <property type="entry name" value="pantethn_trn"/>
    <property type="match status" value="1"/>
</dbReference>
<dbReference type="Pfam" id="PF01648">
    <property type="entry name" value="ACPS"/>
    <property type="match status" value="1"/>
</dbReference>
<dbReference type="SUPFAM" id="SSF56214">
    <property type="entry name" value="4'-phosphopantetheinyl transferase"/>
    <property type="match status" value="1"/>
</dbReference>
<comment type="function">
    <text evidence="1">Transfers the 4'-phosphopantetheine moiety from coenzyme A to a Ser of acyl-carrier-protein.</text>
</comment>
<comment type="catalytic activity">
    <reaction evidence="1">
        <text>apo-[ACP] + CoA = holo-[ACP] + adenosine 3',5'-bisphosphate + H(+)</text>
        <dbReference type="Rhea" id="RHEA:12068"/>
        <dbReference type="Rhea" id="RHEA-COMP:9685"/>
        <dbReference type="Rhea" id="RHEA-COMP:9690"/>
        <dbReference type="ChEBI" id="CHEBI:15378"/>
        <dbReference type="ChEBI" id="CHEBI:29999"/>
        <dbReference type="ChEBI" id="CHEBI:57287"/>
        <dbReference type="ChEBI" id="CHEBI:58343"/>
        <dbReference type="ChEBI" id="CHEBI:64479"/>
        <dbReference type="EC" id="2.7.8.7"/>
    </reaction>
</comment>
<comment type="cofactor">
    <cofactor evidence="1">
        <name>Mg(2+)</name>
        <dbReference type="ChEBI" id="CHEBI:18420"/>
    </cofactor>
</comment>
<comment type="subcellular location">
    <subcellularLocation>
        <location evidence="1">Cytoplasm</location>
    </subcellularLocation>
</comment>
<comment type="similarity">
    <text evidence="1">Belongs to the P-Pant transferase superfamily. AcpS family.</text>
</comment>
<evidence type="ECO:0000255" key="1">
    <source>
        <dbReference type="HAMAP-Rule" id="MF_00101"/>
    </source>
</evidence>
<protein>
    <recommendedName>
        <fullName evidence="1">Holo-[acyl-carrier-protein] synthase</fullName>
        <shortName evidence="1">Holo-ACP synthase</shortName>
        <ecNumber evidence="1">2.7.8.7</ecNumber>
    </recommendedName>
    <alternativeName>
        <fullName evidence="1">4'-phosphopantetheinyl transferase AcpS</fullName>
    </alternativeName>
</protein>
<name>ACPS_YERPA</name>
<organism>
    <name type="scientific">Yersinia pestis bv. Antiqua (strain Antiqua)</name>
    <dbReference type="NCBI Taxonomy" id="360102"/>
    <lineage>
        <taxon>Bacteria</taxon>
        <taxon>Pseudomonadati</taxon>
        <taxon>Pseudomonadota</taxon>
        <taxon>Gammaproteobacteria</taxon>
        <taxon>Enterobacterales</taxon>
        <taxon>Yersiniaceae</taxon>
        <taxon>Yersinia</taxon>
    </lineage>
</organism>
<sequence>MAILGLGTDIVEISRIQAVVERTGERLARRILSPSEWQHYQQHQQPVRFLAKRFAVKEAAAKAFGTGIRNGLAFNQFEVVNDALGKPTLRLHSRAAELAVELGVKSLHVTLADERRYACATVIIES</sequence>
<feature type="chain" id="PRO_1000008526" description="Holo-[acyl-carrier-protein] synthase">
    <location>
        <begin position="1"/>
        <end position="126"/>
    </location>
</feature>
<feature type="binding site" evidence="1">
    <location>
        <position position="9"/>
    </location>
    <ligand>
        <name>Mg(2+)</name>
        <dbReference type="ChEBI" id="CHEBI:18420"/>
    </ligand>
</feature>
<feature type="binding site" evidence="1">
    <location>
        <position position="58"/>
    </location>
    <ligand>
        <name>Mg(2+)</name>
        <dbReference type="ChEBI" id="CHEBI:18420"/>
    </ligand>
</feature>